<comment type="function">
    <text evidence="3 4 5">Serine/threonine kinase which acts as an essential component of the MAP kinase signal transduction pathway. MAPK1/ERK2 and MAPK3/ERK1 are the 2 MAPKs which play an important role in the MAPK/ERK cascade. They participate also in a signaling cascade initiated by activated KIT and KITLG/SCF. Depending on the cellular context, the MAPK/ERK cascade mediates diverse biological functions such as cell growth, adhesion, survival and differentiation through the regulation of transcription, translation, cytoskeletal rearrangements. The MAPK/ERK cascade also plays a role in initiation and regulation of meiosis, mitosis, and postmitotic functions in differentiated cells by phosphorylating a number of transcription factors. About 160 substrates have already been discovered for ERKs. Many of these substrates are localized in the nucleus, and seem to participate in the regulation of transcription upon stimulation. However, other substrates are found in the cytosol as well as in other cellular organelles, and those are responsible for processes such as translation, mitosis and apoptosis. Moreover, the MAPK/ERK cascade is also involved in the regulation of the endosomal dynamics, including lysosome processing and endosome cycling through the perinuclear recycling compartment (PNRC); as well as in the fragmentation of the Golgi apparatus during mitosis. The substrates include transcription factors (such as ATF2, BCL6, ELK1, ERF, FOS, HSF4 or SPZ1), cytoskeletal elements (such as CANX, CTTN, GJA1, MAP2, MAPT, PXN, SORBS3 or STMN1), regulators of apoptosis (such as BAD, BTG2, CASP9, DAPK1, IER3, MCL1 or PPARG), regulators of translation (such as EIF4EBP1 and FXR1) and a variety of other signaling-related molecules (like ARHGEF2, DCC, FRS2 or GRB10). Protein kinases (such as RAF1, RPS6KA1/RSK1, RPS6KA3/RSK2, RPS6KA2/RSK3, RPS6KA6/RSK4, SYK, MKNK1/MNK1, MKNK2/MNK2, RPS6KA5/MSK1, RPS6KA4/MSK2, MAPKAPK3 or MAPKAPK5) and phosphatases (such as DUSP1, DUSP4, DUSP6 or DUSP16) are other substrates which enable the propagation the MAPK/ERK signal to additional cytosolic and nuclear targets, thereby extending the specificity of the cascade. Mediates phosphorylation of TPR in response to EGF stimulation. May play a role in the spindle assembly checkpoint (By similarity). Phosphorylates PML and promotes its interaction with PIN1, leading to PML degradation. Phosphorylates CDK2AP2. Phosphorylates phosphoglycerate kinase PGK1 under hypoxic conditions to promote its targeting to the mitochondrion and suppress the formation of acetyl-coenzyme A from pyruvate (By similarity).</text>
</comment>
<comment type="function">
    <text evidence="3">Acts as a transcriptional repressor. Binds to a [GC]AAA[GC] consensus sequence. Repress the expression of interferon gamma-induced genes. Seems to bind to the promoter of CCL5, DMP1, IFIH1, IFITM1, IRF7, IRF9, LAMP3, OAS1, OAS2, OAS3 and STAT1. Transcriptional activity is independent of kinase activity.</text>
</comment>
<comment type="catalytic activity">
    <reaction evidence="3">
        <text>L-seryl-[protein] + ATP = O-phospho-L-seryl-[protein] + ADP + H(+)</text>
        <dbReference type="Rhea" id="RHEA:17989"/>
        <dbReference type="Rhea" id="RHEA-COMP:9863"/>
        <dbReference type="Rhea" id="RHEA-COMP:11604"/>
        <dbReference type="ChEBI" id="CHEBI:15378"/>
        <dbReference type="ChEBI" id="CHEBI:29999"/>
        <dbReference type="ChEBI" id="CHEBI:30616"/>
        <dbReference type="ChEBI" id="CHEBI:83421"/>
        <dbReference type="ChEBI" id="CHEBI:456216"/>
        <dbReference type="EC" id="2.7.11.24"/>
    </reaction>
</comment>
<comment type="catalytic activity">
    <reaction>
        <text>L-threonyl-[protein] + ATP = O-phospho-L-threonyl-[protein] + ADP + H(+)</text>
        <dbReference type="Rhea" id="RHEA:46608"/>
        <dbReference type="Rhea" id="RHEA-COMP:11060"/>
        <dbReference type="Rhea" id="RHEA-COMP:11605"/>
        <dbReference type="ChEBI" id="CHEBI:15378"/>
        <dbReference type="ChEBI" id="CHEBI:30013"/>
        <dbReference type="ChEBI" id="CHEBI:30616"/>
        <dbReference type="ChEBI" id="CHEBI:61977"/>
        <dbReference type="ChEBI" id="CHEBI:456216"/>
        <dbReference type="EC" id="2.7.11.24"/>
    </reaction>
</comment>
<comment type="cofactor">
    <cofactor evidence="1">
        <name>Mg(2+)</name>
        <dbReference type="ChEBI" id="CHEBI:18420"/>
    </cofactor>
</comment>
<comment type="activity regulation">
    <text evidence="1">Phosphorylated by MAP2K1/MEK1 and MAP2K2/MEK2 on Thr-185 and Tyr-187 in response to external stimuli like insulin or NGF. Both phosphorylations are required for activity. This phosphorylation causes dramatic conformational changes, which enable full activation and interaction of MAPK1/ERK2 with its substrates. Phosphorylation on Ser-29 by SGK1 results in its activation by enhancing its interaction with MAP2K1/MEK1 and MAP2K2/MEK2. Dephosphorylated and inactivated by DUSP1, DUSP3, DUSP6 and DUSP9. Inactivated by pyrimidylpyrrole inhibitors (By similarity).</text>
</comment>
<comment type="subunit">
    <text evidence="3 4 5">Binds both upstream activators and downstream substrates in multimolecular complexes. Interacts with ADAM15, ARHGEF2, ARRB2, DAPK1 (via death domain), HSF4, IER3, IPO7, MKNK2, MORG1, NISCH, PEA15, SGK1, and isoform 1 of NEK2. Interacts (via phosphorylated form) with TPR (via C-terminal region and phosphorylated form); the interaction requires dimerization of MAPK1/ERK2 and increases following EGF stimulation (By similarity). Interacts with MAP2K1 (By similarity). Interacts with DUSP6 (By similarity). Interacts (phosphorylated form) with CAV2 ('Tyr-19'-phosphorylated form); the interaction, promoted by insulin, leads to nuclear location and MAPK1 activation. MKNK2 isoform 1 binding prevents from dephosphorylation and inactivation. Interacts with DCC. The phosphorylated form interacts with PML. Interacts with STYX. Interacts with CDK2AP2. Interacts with CAVIN4. Interacts with DUSP7; the interaction enhances DUSP7 phosphatase activity. Interacts with GIT1; this interaction is necessary for MAPK1 localization to focal adhesions (By similarity). Interacts with ZNF263 (By similarity). Interacts with phosphoglycerate kinase PGK1; the interaction is direct, occurs under hypoxic conditions, and promotes interaction between PGK1 and PIN1 (By similarity).</text>
</comment>
<comment type="subcellular location">
    <subcellularLocation>
        <location evidence="1">Nucleus</location>
    </subcellularLocation>
    <subcellularLocation>
        <location evidence="1">Cytoplasm</location>
        <location evidence="1">Cytoskeleton</location>
        <location evidence="1">Microtubule organizing center</location>
        <location evidence="1">Centrosome</location>
    </subcellularLocation>
    <subcellularLocation>
        <location evidence="5">Cytoplasm</location>
    </subcellularLocation>
    <subcellularLocation>
        <location evidence="1">Cytoplasm</location>
        <location evidence="1">Cytoskeleton</location>
        <location evidence="1">Spindle</location>
    </subcellularLocation>
    <subcellularLocation>
        <location evidence="5">Membrane</location>
        <location evidence="5">Caveola</location>
    </subcellularLocation>
    <subcellularLocation>
        <location evidence="4">Cell junction</location>
        <location evidence="4">Focal adhesion</location>
    </subcellularLocation>
    <text evidence="1">PEA15-binding and phosphorylated DAPK1 promote its cytoplasmic retention. Phosphorylation at Ser-246 and Ser-248 as well as autophosphorylation at Thr-190 promote nuclear localization. Associated with the spindle during prometaphase and metaphase.</text>
</comment>
<comment type="domain">
    <text>The TXY motif contains the threonine and tyrosine residues whose phosphorylation activates the MAP kinases.</text>
</comment>
<comment type="PTM">
    <text evidence="1 3 4">Dually phosphorylated on Thr-185 and Tyr-187, which activates the enzyme. Phosphorylated upon FLT3 and KIT signaling (By similarity). Phosphorylation on Ser-29 by SGK1 results in its activation by enhancing its interaction with MAP2K1/MEK1 and MAP2K2/MEK2 (By similarity). Phosphorylation at Ser-246 and Ser-248 as well as autophosphorylation at Thr-190 promote nuclear localization. Ligand-activated ALK induces tyrosine phosphorylation (By similarity). Dephosphorylated by PTPRJ at Tyr-187 (By similarity). Dephosphorylated by DUSP1 and DUSP2 at Thr-185 and Tyr-187 (By similarity).</text>
</comment>
<comment type="PTM">
    <text evidence="1">ISGylated.</text>
</comment>
<comment type="PTM">
    <text evidence="2">Ubiquitinated by TRIM15 via 'Lys-63'-linked ubiquitination; leading to activation. Deubiquitinated by CYLD.</text>
</comment>
<comment type="similarity">
    <text evidence="8">Belongs to the protein kinase superfamily. CMGC Ser/Thr protein kinase family. MAP kinase subfamily.</text>
</comment>
<protein>
    <recommendedName>
        <fullName evidence="3">Mitogen-activated protein kinase 1</fullName>
        <shortName>MAP kinase 1</shortName>
        <shortName>MAPK 1</shortName>
        <ecNumber evidence="3">2.7.11.24</ecNumber>
    </recommendedName>
    <alternativeName>
        <fullName>ERT1</fullName>
    </alternativeName>
    <alternativeName>
        <fullName>Extracellular signal-regulated kinase 2</fullName>
        <shortName>ERK-2</shortName>
    </alternativeName>
    <alternativeName>
        <fullName>Mitogen-activated protein kinase 2</fullName>
        <shortName>MAP kinase 2</shortName>
        <shortName>MAPK 2</shortName>
    </alternativeName>
</protein>
<proteinExistence type="evidence at transcript level"/>
<organism>
    <name type="scientific">Bos taurus</name>
    <name type="common">Bovine</name>
    <dbReference type="NCBI Taxonomy" id="9913"/>
    <lineage>
        <taxon>Eukaryota</taxon>
        <taxon>Metazoa</taxon>
        <taxon>Chordata</taxon>
        <taxon>Craniata</taxon>
        <taxon>Vertebrata</taxon>
        <taxon>Euteleostomi</taxon>
        <taxon>Mammalia</taxon>
        <taxon>Eutheria</taxon>
        <taxon>Laurasiatheria</taxon>
        <taxon>Artiodactyla</taxon>
        <taxon>Ruminantia</taxon>
        <taxon>Pecora</taxon>
        <taxon>Bovidae</taxon>
        <taxon>Bovinae</taxon>
        <taxon>Bos</taxon>
    </lineage>
</organism>
<accession>P46196</accession>
<accession>A2VE60</accession>
<keyword id="KW-0007">Acetylation</keyword>
<keyword id="KW-0053">Apoptosis</keyword>
<keyword id="KW-0067">ATP-binding</keyword>
<keyword id="KW-0131">Cell cycle</keyword>
<keyword id="KW-0965">Cell junction</keyword>
<keyword id="KW-0963">Cytoplasm</keyword>
<keyword id="KW-0206">Cytoskeleton</keyword>
<keyword id="KW-0418">Kinase</keyword>
<keyword id="KW-0472">Membrane</keyword>
<keyword id="KW-0547">Nucleotide-binding</keyword>
<keyword id="KW-0539">Nucleus</keyword>
<keyword id="KW-0597">Phosphoprotein</keyword>
<keyword id="KW-1185">Reference proteome</keyword>
<keyword id="KW-0723">Serine/threonine-protein kinase</keyword>
<keyword id="KW-0808">Transferase</keyword>
<keyword id="KW-0832">Ubl conjugation</keyword>
<reference key="1">
    <citation type="submission" date="1992-07" db="EMBL/GenBank/DDBJ databases">
        <title>Cloning and sequencing of ERK2 from a bovine adrenal medulla cDNA library.</title>
        <authorList>
            <person name="Ely C.M."/>
            <person name="Cox M.E."/>
            <person name="Her J."/>
            <person name="Parsons S.J."/>
        </authorList>
    </citation>
    <scope>NUCLEOTIDE SEQUENCE [MRNA]</scope>
    <source>
        <tissue>Adrenal medulla</tissue>
    </source>
</reference>
<reference key="2">
    <citation type="submission" date="2007-02" db="EMBL/GenBank/DDBJ databases">
        <authorList>
            <consortium name="NIH - Mammalian Gene Collection (MGC) project"/>
        </authorList>
    </citation>
    <scope>NUCLEOTIDE SEQUENCE [LARGE SCALE MRNA]</scope>
    <source>
        <strain>Hereford</strain>
        <tissue>Fetal pons</tissue>
    </source>
</reference>
<feature type="initiator methionine" description="Removed" evidence="3">
    <location>
        <position position="1"/>
    </location>
</feature>
<feature type="chain" id="PRO_0000186246" description="Mitogen-activated protein kinase 1">
    <location>
        <begin position="2"/>
        <end position="360"/>
    </location>
</feature>
<feature type="domain" description="Protein kinase" evidence="6">
    <location>
        <begin position="25"/>
        <end position="313"/>
    </location>
</feature>
<feature type="short sequence motif" description="TXY">
    <location>
        <begin position="185"/>
        <end position="187"/>
    </location>
</feature>
<feature type="active site" description="Proton acceptor" evidence="6 7">
    <location>
        <position position="149"/>
    </location>
</feature>
<feature type="binding site" evidence="6">
    <location>
        <begin position="31"/>
        <end position="39"/>
    </location>
    <ligand>
        <name>ATP</name>
        <dbReference type="ChEBI" id="CHEBI:30616"/>
    </ligand>
</feature>
<feature type="binding site" evidence="6">
    <location>
        <position position="54"/>
    </location>
    <ligand>
        <name>ATP</name>
        <dbReference type="ChEBI" id="CHEBI:30616"/>
    </ligand>
</feature>
<feature type="modified residue" description="N-acetylalanine" evidence="3">
    <location>
        <position position="2"/>
    </location>
</feature>
<feature type="modified residue" description="Phosphoserine; by SGK1" evidence="3">
    <location>
        <position position="29"/>
    </location>
</feature>
<feature type="modified residue" description="Phosphothreonine; by MAP2K1 and MAP2K2" evidence="3">
    <location>
        <position position="185"/>
    </location>
</feature>
<feature type="modified residue" description="Phosphotyrosine; by MAP2K1 and MAP2K2" evidence="3">
    <location>
        <position position="187"/>
    </location>
</feature>
<feature type="modified residue" description="Phosphothreonine; by autocatalysis" evidence="3">
    <location>
        <position position="190"/>
    </location>
</feature>
<feature type="modified residue" description="Phosphoserine" evidence="3">
    <location>
        <position position="246"/>
    </location>
</feature>
<feature type="modified residue" description="Phosphoserine" evidence="3">
    <location>
        <position position="248"/>
    </location>
</feature>
<feature type="modified residue" description="Phosphoserine" evidence="3">
    <location>
        <position position="284"/>
    </location>
</feature>
<dbReference type="EC" id="2.7.11.24" evidence="3"/>
<dbReference type="EMBL" id="Z14089">
    <property type="protein sequence ID" value="CAA78467.1"/>
    <property type="molecule type" value="mRNA"/>
</dbReference>
<dbReference type="EMBL" id="BC133588">
    <property type="protein sequence ID" value="AAI33589.2"/>
    <property type="molecule type" value="mRNA"/>
</dbReference>
<dbReference type="PIR" id="S25011">
    <property type="entry name" value="S25011"/>
</dbReference>
<dbReference type="RefSeq" id="NP_786987.1">
    <property type="nucleotide sequence ID" value="NM_175793.2"/>
</dbReference>
<dbReference type="BMRB" id="P46196"/>
<dbReference type="SMR" id="P46196"/>
<dbReference type="FunCoup" id="P46196">
    <property type="interactions" value="4221"/>
</dbReference>
<dbReference type="STRING" id="9913.ENSBTAP00000013623"/>
<dbReference type="iPTMnet" id="P46196"/>
<dbReference type="PaxDb" id="9913-ENSBTAP00000013623"/>
<dbReference type="GeneID" id="327672"/>
<dbReference type="KEGG" id="bta:327672"/>
<dbReference type="CTD" id="5594"/>
<dbReference type="VEuPathDB" id="HostDB:ENSBTAG00000010312"/>
<dbReference type="eggNOG" id="KOG0660">
    <property type="taxonomic scope" value="Eukaryota"/>
</dbReference>
<dbReference type="HOGENOM" id="CLU_000288_181_1_1"/>
<dbReference type="InParanoid" id="P46196"/>
<dbReference type="OMA" id="SFFDFDY"/>
<dbReference type="OrthoDB" id="192887at2759"/>
<dbReference type="Reactome" id="R-BTA-111995">
    <property type="pathway name" value="phospho-PLA2 pathway"/>
</dbReference>
<dbReference type="Reactome" id="R-BTA-112409">
    <property type="pathway name" value="RAF-independent MAPK1/3 activation"/>
</dbReference>
<dbReference type="Reactome" id="R-BTA-112411">
    <property type="pathway name" value="MAPK1 (ERK2) activation"/>
</dbReference>
<dbReference type="Reactome" id="R-BTA-1181150">
    <property type="pathway name" value="Signaling by NODAL"/>
</dbReference>
<dbReference type="Reactome" id="R-BTA-1295596">
    <property type="pathway name" value="Spry regulation of FGF signaling"/>
</dbReference>
<dbReference type="Reactome" id="R-BTA-1502540">
    <property type="pathway name" value="Signaling by Activin"/>
</dbReference>
<dbReference type="Reactome" id="R-BTA-162658">
    <property type="pathway name" value="Golgi Cisternae Pericentriolar Stack Reorganization"/>
</dbReference>
<dbReference type="Reactome" id="R-BTA-170968">
    <property type="pathway name" value="Frs2-mediated activation"/>
</dbReference>
<dbReference type="Reactome" id="R-BTA-198753">
    <property type="pathway name" value="ERK/MAPK targets"/>
</dbReference>
<dbReference type="Reactome" id="R-BTA-202670">
    <property type="pathway name" value="ERKs are inactivated"/>
</dbReference>
<dbReference type="Reactome" id="R-BTA-2029482">
    <property type="pathway name" value="Regulation of actin dynamics for phagocytic cup formation"/>
</dbReference>
<dbReference type="Reactome" id="R-BTA-2173795">
    <property type="pathway name" value="Downregulation of SMAD2/3:SMAD4 transcriptional activity"/>
</dbReference>
<dbReference type="Reactome" id="R-BTA-2173796">
    <property type="pathway name" value="SMAD2/SMAD3:SMAD4 heterotrimer regulates transcription"/>
</dbReference>
<dbReference type="Reactome" id="R-BTA-2559580">
    <property type="pathway name" value="Oxidative Stress Induced Senescence"/>
</dbReference>
<dbReference type="Reactome" id="R-BTA-2559582">
    <property type="pathway name" value="Senescence-Associated Secretory Phenotype (SASP)"/>
</dbReference>
<dbReference type="Reactome" id="R-BTA-2559585">
    <property type="pathway name" value="Oncogene Induced Senescence"/>
</dbReference>
<dbReference type="Reactome" id="R-BTA-2871796">
    <property type="pathway name" value="FCERI mediated MAPK activation"/>
</dbReference>
<dbReference type="Reactome" id="R-BTA-3371453">
    <property type="pathway name" value="Regulation of HSF1-mediated heat shock response"/>
</dbReference>
<dbReference type="Reactome" id="R-BTA-375165">
    <property type="pathway name" value="NCAM signaling for neurite out-growth"/>
</dbReference>
<dbReference type="Reactome" id="R-BTA-437239">
    <property type="pathway name" value="Recycling pathway of L1"/>
</dbReference>
<dbReference type="Reactome" id="R-BTA-445144">
    <property type="pathway name" value="Signal transduction by L1"/>
</dbReference>
<dbReference type="Reactome" id="R-BTA-450341">
    <property type="pathway name" value="Activation of the AP-1 family of transcription factors"/>
</dbReference>
<dbReference type="Reactome" id="R-BTA-456926">
    <property type="pathway name" value="Thrombin signalling through proteinase activated receptors (PARs)"/>
</dbReference>
<dbReference type="Reactome" id="R-BTA-5654726">
    <property type="pathway name" value="Negative regulation of FGFR1 signaling"/>
</dbReference>
<dbReference type="Reactome" id="R-BTA-5654727">
    <property type="pathway name" value="Negative regulation of FGFR2 signaling"/>
</dbReference>
<dbReference type="Reactome" id="R-BTA-5654732">
    <property type="pathway name" value="Negative regulation of FGFR3 signaling"/>
</dbReference>
<dbReference type="Reactome" id="R-BTA-5654733">
    <property type="pathway name" value="Negative regulation of FGFR4 signaling"/>
</dbReference>
<dbReference type="Reactome" id="R-BTA-5663213">
    <property type="pathway name" value="RHO GTPases Activate WASPs and WAVEs"/>
</dbReference>
<dbReference type="Reactome" id="R-BTA-5668599">
    <property type="pathway name" value="RHO GTPases Activate NADPH Oxidases"/>
</dbReference>
<dbReference type="Reactome" id="R-BTA-5673001">
    <property type="pathway name" value="RAF/MAP kinase cascade"/>
</dbReference>
<dbReference type="Reactome" id="R-BTA-5674135">
    <property type="pathway name" value="MAP2K and MAPK activation"/>
</dbReference>
<dbReference type="Reactome" id="R-BTA-5674499">
    <property type="pathway name" value="Negative feedback regulation of MAPK pathway"/>
</dbReference>
<dbReference type="Reactome" id="R-BTA-5675221">
    <property type="pathway name" value="Negative regulation of MAPK pathway"/>
</dbReference>
<dbReference type="Reactome" id="R-BTA-6798695">
    <property type="pathway name" value="Neutrophil degranulation"/>
</dbReference>
<dbReference type="Reactome" id="R-BTA-6811558">
    <property type="pathway name" value="PI5P, PP2A and IER3 Regulate PI3K/AKT Signaling"/>
</dbReference>
<dbReference type="Reactome" id="R-BTA-74749">
    <property type="pathway name" value="Signal attenuation"/>
</dbReference>
<dbReference type="Reactome" id="R-BTA-877300">
    <property type="pathway name" value="Interferon gamma signaling"/>
</dbReference>
<dbReference type="Reactome" id="R-BTA-881907">
    <property type="pathway name" value="Gastrin-CREB signalling pathway via PKC and MAPK"/>
</dbReference>
<dbReference type="Reactome" id="R-BTA-9627069">
    <property type="pathway name" value="Regulation of the apoptosome activity"/>
</dbReference>
<dbReference type="Reactome" id="R-BTA-9634635">
    <property type="pathway name" value="Estrogen-stimulated signaling through PRKCZ"/>
</dbReference>
<dbReference type="Reactome" id="R-BTA-9634638">
    <property type="pathway name" value="Estrogen-dependent nuclear events downstream of ESR-membrane signaling"/>
</dbReference>
<dbReference type="Reactome" id="R-BTA-9732724">
    <property type="pathway name" value="IFNG signaling activates MAPKs"/>
</dbReference>
<dbReference type="Reactome" id="R-BTA-982772">
    <property type="pathway name" value="Growth hormone receptor signaling"/>
</dbReference>
<dbReference type="Reactome" id="R-BTA-9856649">
    <property type="pathway name" value="Transcriptional and post-translational regulation of MITF-M expression and activity"/>
</dbReference>
<dbReference type="Proteomes" id="UP000009136">
    <property type="component" value="Chromosome 17"/>
</dbReference>
<dbReference type="Bgee" id="ENSBTAG00000010312">
    <property type="expression patterns" value="Expressed in temporal cortex and 105 other cell types or tissues"/>
</dbReference>
<dbReference type="GO" id="GO:0005901">
    <property type="term" value="C:caveola"/>
    <property type="evidence" value="ECO:0000250"/>
    <property type="project" value="UniProtKB"/>
</dbReference>
<dbReference type="GO" id="GO:0005813">
    <property type="term" value="C:centrosome"/>
    <property type="evidence" value="ECO:0007669"/>
    <property type="project" value="UniProtKB-SubCell"/>
</dbReference>
<dbReference type="GO" id="GO:0005737">
    <property type="term" value="C:cytoplasm"/>
    <property type="evidence" value="ECO:0000250"/>
    <property type="project" value="UniProtKB"/>
</dbReference>
<dbReference type="GO" id="GO:0005925">
    <property type="term" value="C:focal adhesion"/>
    <property type="evidence" value="ECO:0007669"/>
    <property type="project" value="UniProtKB-SubCell"/>
</dbReference>
<dbReference type="GO" id="GO:0072686">
    <property type="term" value="C:mitotic spindle"/>
    <property type="evidence" value="ECO:0000250"/>
    <property type="project" value="UniProtKB"/>
</dbReference>
<dbReference type="GO" id="GO:0005634">
    <property type="term" value="C:nucleus"/>
    <property type="evidence" value="ECO:0000250"/>
    <property type="project" value="UniProtKB"/>
</dbReference>
<dbReference type="GO" id="GO:0005886">
    <property type="term" value="C:plasma membrane"/>
    <property type="evidence" value="ECO:0000250"/>
    <property type="project" value="UniProtKB"/>
</dbReference>
<dbReference type="GO" id="GO:0005524">
    <property type="term" value="F:ATP binding"/>
    <property type="evidence" value="ECO:0007669"/>
    <property type="project" value="UniProtKB-KW"/>
</dbReference>
<dbReference type="GO" id="GO:0004707">
    <property type="term" value="F:MAP kinase activity"/>
    <property type="evidence" value="ECO:0007669"/>
    <property type="project" value="UniProtKB-EC"/>
</dbReference>
<dbReference type="GO" id="GO:0106310">
    <property type="term" value="F:protein serine kinase activity"/>
    <property type="evidence" value="ECO:0007669"/>
    <property type="project" value="RHEA"/>
</dbReference>
<dbReference type="GO" id="GO:0004674">
    <property type="term" value="F:protein serine/threonine kinase activity"/>
    <property type="evidence" value="ECO:0000314"/>
    <property type="project" value="UniProtKB"/>
</dbReference>
<dbReference type="GO" id="GO:0006915">
    <property type="term" value="P:apoptotic process"/>
    <property type="evidence" value="ECO:0007669"/>
    <property type="project" value="UniProtKB-KW"/>
</dbReference>
<dbReference type="GO" id="GO:0007166">
    <property type="term" value="P:cell surface receptor signaling pathway"/>
    <property type="evidence" value="ECO:0000318"/>
    <property type="project" value="GO_Central"/>
</dbReference>
<dbReference type="GO" id="GO:0071456">
    <property type="term" value="P:cellular response to hypoxia"/>
    <property type="evidence" value="ECO:0000315"/>
    <property type="project" value="UniProtKB"/>
</dbReference>
<dbReference type="GO" id="GO:0035556">
    <property type="term" value="P:intracellular signal transduction"/>
    <property type="evidence" value="ECO:0000318"/>
    <property type="project" value="GO_Central"/>
</dbReference>
<dbReference type="GO" id="GO:0160218">
    <property type="term" value="P:negative regulation of acetyl-CoA biosynthetic process from pyruvate"/>
    <property type="evidence" value="ECO:0000315"/>
    <property type="project" value="UniProtKB"/>
</dbReference>
<dbReference type="GO" id="GO:0018105">
    <property type="term" value="P:peptidyl-serine phosphorylation"/>
    <property type="evidence" value="ECO:0000250"/>
    <property type="project" value="UniProtKB"/>
</dbReference>
<dbReference type="GO" id="GO:0018107">
    <property type="term" value="P:peptidyl-threonine phosphorylation"/>
    <property type="evidence" value="ECO:0000250"/>
    <property type="project" value="UniProtKB"/>
</dbReference>
<dbReference type="GO" id="GO:1903955">
    <property type="term" value="P:positive regulation of protein targeting to mitochondrion"/>
    <property type="evidence" value="ECO:0000315"/>
    <property type="project" value="UniProtKB"/>
</dbReference>
<dbReference type="GO" id="GO:0006468">
    <property type="term" value="P:protein phosphorylation"/>
    <property type="evidence" value="ECO:0000250"/>
    <property type="project" value="UniProtKB"/>
</dbReference>
<dbReference type="GO" id="GO:0031647">
    <property type="term" value="P:regulation of protein stability"/>
    <property type="evidence" value="ECO:0000250"/>
    <property type="project" value="UniProtKB"/>
</dbReference>
<dbReference type="GO" id="GO:0070849">
    <property type="term" value="P:response to epidermal growth factor"/>
    <property type="evidence" value="ECO:0000250"/>
    <property type="project" value="UniProtKB"/>
</dbReference>
<dbReference type="CDD" id="cd07849">
    <property type="entry name" value="STKc_ERK1_2_like"/>
    <property type="match status" value="1"/>
</dbReference>
<dbReference type="FunFam" id="1.10.510.10:FF:000624">
    <property type="entry name" value="Mitogen-activated protein kinase"/>
    <property type="match status" value="1"/>
</dbReference>
<dbReference type="FunFam" id="3.30.200.20:FF:000373">
    <property type="entry name" value="Mitogen-activated protein kinase 1"/>
    <property type="match status" value="1"/>
</dbReference>
<dbReference type="Gene3D" id="3.30.200.20">
    <property type="entry name" value="Phosphorylase Kinase, domain 1"/>
    <property type="match status" value="1"/>
</dbReference>
<dbReference type="Gene3D" id="1.10.510.10">
    <property type="entry name" value="Transferase(Phosphotransferase) domain 1"/>
    <property type="match status" value="1"/>
</dbReference>
<dbReference type="InterPro" id="IPR011009">
    <property type="entry name" value="Kinase-like_dom_sf"/>
</dbReference>
<dbReference type="InterPro" id="IPR050117">
    <property type="entry name" value="MAP_kinase"/>
</dbReference>
<dbReference type="InterPro" id="IPR003527">
    <property type="entry name" value="MAP_kinase_CS"/>
</dbReference>
<dbReference type="InterPro" id="IPR008349">
    <property type="entry name" value="MAPK_ERK1/2"/>
</dbReference>
<dbReference type="InterPro" id="IPR000719">
    <property type="entry name" value="Prot_kinase_dom"/>
</dbReference>
<dbReference type="InterPro" id="IPR017441">
    <property type="entry name" value="Protein_kinase_ATP_BS"/>
</dbReference>
<dbReference type="InterPro" id="IPR008271">
    <property type="entry name" value="Ser/Thr_kinase_AS"/>
</dbReference>
<dbReference type="PANTHER" id="PTHR24055">
    <property type="entry name" value="MITOGEN-ACTIVATED PROTEIN KINASE"/>
    <property type="match status" value="1"/>
</dbReference>
<dbReference type="Pfam" id="PF00069">
    <property type="entry name" value="Pkinase"/>
    <property type="match status" value="1"/>
</dbReference>
<dbReference type="PRINTS" id="PR01770">
    <property type="entry name" value="ERK1ERK2MAPK"/>
</dbReference>
<dbReference type="SMART" id="SM00220">
    <property type="entry name" value="S_TKc"/>
    <property type="match status" value="1"/>
</dbReference>
<dbReference type="SUPFAM" id="SSF56112">
    <property type="entry name" value="Protein kinase-like (PK-like)"/>
    <property type="match status" value="1"/>
</dbReference>
<dbReference type="PROSITE" id="PS01351">
    <property type="entry name" value="MAPK"/>
    <property type="match status" value="1"/>
</dbReference>
<dbReference type="PROSITE" id="PS00107">
    <property type="entry name" value="PROTEIN_KINASE_ATP"/>
    <property type="match status" value="1"/>
</dbReference>
<dbReference type="PROSITE" id="PS50011">
    <property type="entry name" value="PROTEIN_KINASE_DOM"/>
    <property type="match status" value="1"/>
</dbReference>
<dbReference type="PROSITE" id="PS00108">
    <property type="entry name" value="PROTEIN_KINASE_ST"/>
    <property type="match status" value="1"/>
</dbReference>
<gene>
    <name evidence="3" type="primary">MAPK1</name>
    <name type="synonym">ERK2</name>
    <name type="synonym">PRKM1</name>
</gene>
<evidence type="ECO:0000250" key="1"/>
<evidence type="ECO:0000250" key="2">
    <source>
        <dbReference type="UniProtKB" id="P27361"/>
    </source>
</evidence>
<evidence type="ECO:0000250" key="3">
    <source>
        <dbReference type="UniProtKB" id="P28482"/>
    </source>
</evidence>
<evidence type="ECO:0000250" key="4">
    <source>
        <dbReference type="UniProtKB" id="P63085"/>
    </source>
</evidence>
<evidence type="ECO:0000250" key="5">
    <source>
        <dbReference type="UniProtKB" id="P63086"/>
    </source>
</evidence>
<evidence type="ECO:0000255" key="6">
    <source>
        <dbReference type="PROSITE-ProRule" id="PRU00159"/>
    </source>
</evidence>
<evidence type="ECO:0000255" key="7">
    <source>
        <dbReference type="PROSITE-ProRule" id="PRU10027"/>
    </source>
</evidence>
<evidence type="ECO:0000305" key="8"/>
<sequence>MAAAAAAGAGPEMVRGQVFDVGPRYTNLSYIGEGAYGMVCSAYDNVNKVRVAIKKISPFEHQTYCQRTLREIKILLRFRHENIIGINDIIRAPTIEQMKDVYIVQDLMETDLYKLLKTQHLSNDHICYFLYQILRGLKYIHSANVLHRDLKPSNLLLNTTCDLKICDFGLARVADPDHDHTGFLTEYVATRWYRAPEIMLNSKGYTKSIDIWSVGCILAEMLSNRPIFPGKHYLDQLNHILGILGSPSQEDLNCIINLKARNYLLSLPHKNKVPWNRLFPNADSKALDLLDKMLTFNPHKRIEVEQALAHPYLEQYYDPSDEPVAEAPFKFDMELDDLPKEKLKELIFEETARFQPGYRS</sequence>
<name>MK01_BOVIN</name>